<dbReference type="EMBL" id="Z15089">
    <property type="protein sequence ID" value="CAA78801.1"/>
    <property type="molecule type" value="Genomic_DNA"/>
</dbReference>
<dbReference type="PIR" id="S25689">
    <property type="entry name" value="S25689"/>
</dbReference>
<dbReference type="PIR" id="S32944">
    <property type="entry name" value="S32944"/>
</dbReference>
<dbReference type="SMR" id="Q03007"/>
<dbReference type="Gene3D" id="3.30.1370.140">
    <property type="entry name" value="HupH hydrogenase expression protein, C-terminal domain"/>
    <property type="match status" value="2"/>
</dbReference>
<dbReference type="InterPro" id="IPR038527">
    <property type="entry name" value="HupH_C_sf"/>
</dbReference>
<dbReference type="InterPro" id="IPR006894">
    <property type="entry name" value="HupH_Hydgase_express_prot_C"/>
</dbReference>
<dbReference type="Pfam" id="PF04809">
    <property type="entry name" value="HupH_C"/>
    <property type="match status" value="2"/>
</dbReference>
<name>HUPH_RHOCA</name>
<proteinExistence type="inferred from homology"/>
<gene>
    <name type="primary">hupH</name>
</gene>
<comment type="similarity">
    <text evidence="2">Belongs to the HupH/HyaF family.</text>
</comment>
<comment type="caution">
    <text evidence="2">In an older version of the nucleotide entry, this gene was in two parts, called hupH and hupI respectively.</text>
</comment>
<organism>
    <name type="scientific">Rhodobacter capsulatus</name>
    <name type="common">Rhodopseudomonas capsulata</name>
    <dbReference type="NCBI Taxonomy" id="1061"/>
    <lineage>
        <taxon>Bacteria</taxon>
        <taxon>Pseudomonadati</taxon>
        <taxon>Pseudomonadota</taxon>
        <taxon>Alphaproteobacteria</taxon>
        <taxon>Rhodobacterales</taxon>
        <taxon>Rhodobacter group</taxon>
        <taxon>Rhodobacter</taxon>
    </lineage>
</organism>
<feature type="chain" id="PRO_0000201420" description="Hydrogenase expression/formation protein HupH">
    <location>
        <begin position="1"/>
        <end position="275"/>
    </location>
</feature>
<feature type="region of interest" description="Disordered" evidence="1">
    <location>
        <begin position="1"/>
        <end position="24"/>
    </location>
</feature>
<evidence type="ECO:0000256" key="1">
    <source>
        <dbReference type="SAM" id="MobiDB-lite"/>
    </source>
</evidence>
<evidence type="ECO:0000305" key="2"/>
<accession>Q03007</accession>
<accession>Q03008</accession>
<reference key="1">
    <citation type="journal article" date="1993" name="Mol. Microbiol.">
        <title>Organization of the genes necessary for hydrogenase expression in Rhodobacter capsulatus. Sequence analysis and identification of two hyp regulatory mutants.</title>
        <authorList>
            <person name="Colbeau A."/>
            <person name="Richaud P."/>
            <person name="Toussaint B."/>
            <person name="Caballero F.J."/>
            <person name="Elster C."/>
            <person name="Delphin C."/>
            <person name="Smith R.L."/>
            <person name="Chabert J."/>
            <person name="Vignais P.M."/>
        </authorList>
    </citation>
    <scope>NUCLEOTIDE SEQUENCE [GENOMIC DNA]</scope>
    <source>
        <strain>ATCC 33303 / B10</strain>
    </source>
</reference>
<protein>
    <recommendedName>
        <fullName>Hydrogenase expression/formation protein HupH</fullName>
    </recommendedName>
</protein>
<sequence length="275" mass="28967">MVSNFHLPPVGFGPGSQPEGDEELGYMQLPSGMRTYSAHLPEVEDSSAVTPALKLLDEIAAGAEACARGGMASFDLAGLDAQNRALIAETMGQGEVAMKIRGIPALMVQESVFAGVWSVAGAGVDRIEVGAVPAAALSRAFEPFRKGQTALPPLSDGVVNAPALIAELFDKSAAYVGGAADVINLTLLPHTEEDLTLLDYMLGEGAVTILSRGYGNCRITATATPHVWRVQFYNSTDALILDTIEVTTMPEVALAAREDLEDSAGRIREVLEAIR</sequence>